<comment type="catalytic activity">
    <reaction evidence="2">
        <text>The enzyme specifically hydrolyzes (1-&gt;4)-beta-D-galactosidic linkages in type I arabinogalactans.</text>
        <dbReference type="EC" id="3.2.1.89"/>
    </reaction>
</comment>
<comment type="miscellaneous">
    <text evidence="2">Has a pH range of 5.5-8.5 with optimum of 7.0; and a temperature optimum of 65 degrees Celsius at pH 6.5.</text>
</comment>
<comment type="similarity">
    <text evidence="2">Belongs to the glycosyl hydrolase 53 family.</text>
</comment>
<reference evidence="3 4" key="1">
    <citation type="journal article" date="2003" name="Protein Sci.">
        <title>Structure of two fungal beta-1,4-galactanases: searching for the basis for temperature and pH optimum.</title>
        <authorList>
            <person name="Le Nours J."/>
            <person name="Ryttersgaard C."/>
            <person name="Lo Leggio L."/>
            <person name="Oestergaard P.R."/>
            <person name="Borchert T.V."/>
            <person name="Christensen L.L.H."/>
            <person name="Larsen S."/>
        </authorList>
    </citation>
    <scope>X-RAY CRYSTALLOGRAPHY (1.9 ANGSTROMS)</scope>
    <scope>CATALYTIC ACTIVITY</scope>
    <scope>GLYCOSYLATION AT ASN-111</scope>
    <scope>MUTAGENESIS OF 90-ASP-HIS-91</scope>
</reference>
<proteinExistence type="evidence at protein level"/>
<evidence type="ECO:0000250" key="1">
    <source>
        <dbReference type="UniProtKB" id="P48841"/>
    </source>
</evidence>
<evidence type="ECO:0000269" key="2">
    <source>
    </source>
</evidence>
<evidence type="ECO:0000305" key="3"/>
<evidence type="ECO:0000312" key="4">
    <source>
        <dbReference type="PDB" id="1HJS"/>
    </source>
</evidence>
<evidence type="ECO:0007829" key="5">
    <source>
        <dbReference type="PDB" id="1HJS"/>
    </source>
</evidence>
<organism>
    <name type="scientific">Thermothelomyces thermophilus</name>
    <name type="common">Myceliophthora thermophila</name>
    <dbReference type="NCBI Taxonomy" id="78579"/>
    <lineage>
        <taxon>Eukaryota</taxon>
        <taxon>Fungi</taxon>
        <taxon>Dikarya</taxon>
        <taxon>Ascomycota</taxon>
        <taxon>Pezizomycotina</taxon>
        <taxon>Sordariomycetes</taxon>
        <taxon>Sordariomycetidae</taxon>
        <taxon>Sordariales</taxon>
        <taxon>Chaetomiaceae</taxon>
        <taxon>Thermothelomyces</taxon>
    </lineage>
</organism>
<protein>
    <recommendedName>
        <fullName>Arabinogalactan endo-beta-1,4-galactanase</fullName>
        <ecNumber>3.2.1.89</ecNumber>
    </recommendedName>
    <alternativeName>
        <fullName>Endo-1,4-beta-galactanase</fullName>
        <shortName>Galactanase</shortName>
    </alternativeName>
</protein>
<feature type="chain" id="PRO_0000057706" description="Arabinogalactan endo-beta-1,4-galactanase">
    <location>
        <begin position="1"/>
        <end position="332"/>
    </location>
</feature>
<feature type="active site" description="Proton donor" evidence="1">
    <location>
        <position position="135"/>
    </location>
</feature>
<feature type="active site" description="Nucleophile" evidence="1">
    <location>
        <position position="245"/>
    </location>
</feature>
<feature type="glycosylation site" description="N-linked (GlcNAc...) asparagine" evidence="2">
    <location>
        <position position="111"/>
    </location>
</feature>
<feature type="mutagenesis site" description="Lowers pH profile by 0.5 units." evidence="2">
    <original>AH</original>
    <variation>SD</variation>
    <location>
        <begin position="90"/>
        <end position="91"/>
    </location>
</feature>
<feature type="strand" evidence="5">
    <location>
        <begin position="3"/>
        <end position="8"/>
    </location>
</feature>
<feature type="helix" evidence="5">
    <location>
        <begin position="12"/>
        <end position="17"/>
    </location>
</feature>
<feature type="helix" evidence="5">
    <location>
        <begin position="32"/>
        <end position="38"/>
    </location>
</feature>
<feature type="strand" evidence="5">
    <location>
        <begin position="43"/>
        <end position="48"/>
    </location>
</feature>
<feature type="helix" evidence="5">
    <location>
        <begin position="59"/>
        <end position="71"/>
    </location>
</feature>
<feature type="strand" evidence="5">
    <location>
        <begin position="75"/>
        <end position="80"/>
    </location>
</feature>
<feature type="strand" evidence="5">
    <location>
        <begin position="83"/>
        <end position="85"/>
    </location>
</feature>
<feature type="helix" evidence="5">
    <location>
        <begin position="102"/>
        <end position="122"/>
    </location>
</feature>
<feature type="strand" evidence="5">
    <location>
        <begin position="128"/>
        <end position="135"/>
    </location>
</feature>
<feature type="helix" evidence="5">
    <location>
        <begin position="136"/>
        <end position="138"/>
    </location>
</feature>
<feature type="helix" evidence="5">
    <location>
        <begin position="150"/>
        <end position="165"/>
    </location>
</feature>
<feature type="strand" evidence="5">
    <location>
        <begin position="174"/>
        <end position="180"/>
    </location>
</feature>
<feature type="helix" evidence="5">
    <location>
        <begin position="185"/>
        <end position="196"/>
    </location>
</feature>
<feature type="strand" evidence="5">
    <location>
        <begin position="199"/>
        <end position="201"/>
    </location>
</feature>
<feature type="helix" evidence="5">
    <location>
        <begin position="203"/>
        <end position="205"/>
    </location>
</feature>
<feature type="strand" evidence="5">
    <location>
        <begin position="208"/>
        <end position="212"/>
    </location>
</feature>
<feature type="strand" evidence="5">
    <location>
        <begin position="215"/>
        <end position="217"/>
    </location>
</feature>
<feature type="helix" evidence="5">
    <location>
        <begin position="223"/>
        <end position="237"/>
    </location>
</feature>
<feature type="strand" evidence="5">
    <location>
        <begin position="240"/>
        <end position="245"/>
    </location>
</feature>
<feature type="helix" evidence="5">
    <location>
        <begin position="261"/>
        <end position="263"/>
    </location>
</feature>
<feature type="helix" evidence="5">
    <location>
        <begin position="270"/>
        <end position="285"/>
    </location>
</feature>
<feature type="strand" evidence="5">
    <location>
        <begin position="290"/>
        <end position="296"/>
    </location>
</feature>
<feature type="helix" evidence="5">
    <location>
        <begin position="301"/>
        <end position="303"/>
    </location>
</feature>
<feature type="turn" evidence="5">
    <location>
        <begin position="304"/>
        <end position="307"/>
    </location>
</feature>
<feature type="strand" evidence="5">
    <location>
        <begin position="308"/>
        <end position="312"/>
    </location>
</feature>
<feature type="strand" evidence="5">
    <location>
        <begin position="320"/>
        <end position="322"/>
    </location>
</feature>
<feature type="helix" evidence="5">
    <location>
        <begin position="324"/>
        <end position="330"/>
    </location>
</feature>
<dbReference type="EC" id="3.2.1.89"/>
<dbReference type="PDB" id="1HJS">
    <property type="method" value="X-ray"/>
    <property type="resolution" value="1.87 A"/>
    <property type="chains" value="A/B/C/D=1-332"/>
</dbReference>
<dbReference type="PDB" id="1HJU">
    <property type="method" value="X-ray"/>
    <property type="resolution" value="2.15 A"/>
    <property type="chains" value="A/B/C/D=1-332"/>
</dbReference>
<dbReference type="PDBsum" id="1HJS"/>
<dbReference type="PDBsum" id="1HJU"/>
<dbReference type="SMR" id="P83692"/>
<dbReference type="CAZy" id="GH53">
    <property type="family name" value="Glycoside Hydrolase Family 53"/>
</dbReference>
<dbReference type="iPTMnet" id="P83692"/>
<dbReference type="VEuPathDB" id="FungiDB:MYCTH_43163"/>
<dbReference type="EvolutionaryTrace" id="P83692"/>
<dbReference type="GO" id="GO:0031218">
    <property type="term" value="F:arabinogalactan endo-1,4-beta-galactosidase activity"/>
    <property type="evidence" value="ECO:0007669"/>
    <property type="project" value="UniProtKB-EC"/>
</dbReference>
<dbReference type="GO" id="GO:0015926">
    <property type="term" value="F:glucosidase activity"/>
    <property type="evidence" value="ECO:0007669"/>
    <property type="project" value="InterPro"/>
</dbReference>
<dbReference type="GO" id="GO:0004553">
    <property type="term" value="F:hydrolase activity, hydrolyzing O-glycosyl compounds"/>
    <property type="evidence" value="ECO:0000314"/>
    <property type="project" value="UniProtKB"/>
</dbReference>
<dbReference type="GO" id="GO:0030247">
    <property type="term" value="F:polysaccharide binding"/>
    <property type="evidence" value="ECO:0000314"/>
    <property type="project" value="UniProtKB"/>
</dbReference>
<dbReference type="GO" id="GO:0016998">
    <property type="term" value="P:cell wall macromolecule catabolic process"/>
    <property type="evidence" value="ECO:0000304"/>
    <property type="project" value="UniProtKB"/>
</dbReference>
<dbReference type="GO" id="GO:0045490">
    <property type="term" value="P:pectin catabolic process"/>
    <property type="evidence" value="ECO:0007669"/>
    <property type="project" value="TreeGrafter"/>
</dbReference>
<dbReference type="FunFam" id="3.20.20.80:FF:000077">
    <property type="entry name" value="Arabinogalactan endo-beta-1,4-galactanase"/>
    <property type="match status" value="1"/>
</dbReference>
<dbReference type="Gene3D" id="3.20.20.80">
    <property type="entry name" value="Glycosidases"/>
    <property type="match status" value="1"/>
</dbReference>
<dbReference type="InterPro" id="IPR011683">
    <property type="entry name" value="Glyco_hydro_53"/>
</dbReference>
<dbReference type="InterPro" id="IPR017853">
    <property type="entry name" value="Glycoside_hydrolase_SF"/>
</dbReference>
<dbReference type="PANTHER" id="PTHR34983">
    <property type="entry name" value="ARABINOGALACTAN ENDO-BETA-1,4-GALACTANASE A"/>
    <property type="match status" value="1"/>
</dbReference>
<dbReference type="PANTHER" id="PTHR34983:SF1">
    <property type="entry name" value="ARABINOGALACTAN ENDO-BETA-1,4-GALACTANASE A"/>
    <property type="match status" value="1"/>
</dbReference>
<dbReference type="Pfam" id="PF07745">
    <property type="entry name" value="Glyco_hydro_53"/>
    <property type="match status" value="1"/>
</dbReference>
<dbReference type="SUPFAM" id="SSF51445">
    <property type="entry name" value="(Trans)glycosidases"/>
    <property type="match status" value="1"/>
</dbReference>
<name>GANA_THETO</name>
<sequence length="332" mass="36812">ALTYRGVDWSSVVVEERAGVSYKNTNGNAQPLENILAANGVNTVRQRVWVNPADGNYNLDYNIAIAKRAKAAGLGVYIDFHYSDTWADPAHQTMPAGWPSDIDNLSWKLYNYTLDAANKLQNAGIQPTIVSIGNEIRAGLLWPTGRTENWANIARLLHSAAWGIKDSSLSPKPKIMIHLDNGWDWGTQNWWYTNVLKQGTLELSDFDMMGVSFYPFYSSSATLSALKSSLDNMAKTWNKEIAVVETNWPISCPNPRYSFPSDVKNIPFSPEGQTTFITNVANIVSSVSRGVGLFYWEPAWIHNANLGSSCADNTMFSQSGQALSSLSVFQRI</sequence>
<keyword id="KW-0002">3D-structure</keyword>
<keyword id="KW-0325">Glycoprotein</keyword>
<keyword id="KW-0326">Glycosidase</keyword>
<keyword id="KW-0378">Hydrolase</keyword>
<accession>P83692</accession>